<accession>P80940</accession>
<organism>
    <name type="scientific">Lymantria dispar</name>
    <name type="common">Gypsy moth</name>
    <name type="synonym">Porthetria dispar</name>
    <dbReference type="NCBI Taxonomy" id="13123"/>
    <lineage>
        <taxon>Eukaryota</taxon>
        <taxon>Metazoa</taxon>
        <taxon>Ecdysozoa</taxon>
        <taxon>Arthropoda</taxon>
        <taxon>Hexapoda</taxon>
        <taxon>Insecta</taxon>
        <taxon>Pterygota</taxon>
        <taxon>Neoptera</taxon>
        <taxon>Endopterygota</taxon>
        <taxon>Lepidoptera</taxon>
        <taxon>Glossata</taxon>
        <taxon>Ditrysia</taxon>
        <taxon>Noctuoidea</taxon>
        <taxon>Erebidae</taxon>
        <taxon>Lymantriinae</taxon>
        <taxon>Lymantria</taxon>
    </lineage>
</organism>
<sequence length="14" mass="1553">IAIFNAYTPLPFAD</sequence>
<proteinExistence type="evidence at protein level"/>
<keyword id="KW-0903">Direct protein sequencing</keyword>
<name>ECDC_LYMDI</name>
<comment type="function">
    <text>Stimulates synthesis of ecdysteroid in the testes of larvae and pupae.</text>
</comment>
<feature type="peptide" id="PRO_0000044137" description="Testis ecdysiotropin peptide C">
    <location>
        <begin position="1"/>
        <end position="14"/>
    </location>
</feature>
<reference key="1">
    <citation type="journal article" date="1997" name="Arch. Insect Biochem. Physiol.">
        <title>Naturally occurring analogs of Lymantria testis ecdysiotropin, a gonadotropin isolated from brains of Lymantria dispar pupae.</title>
        <authorList>
            <person name="Loeb M.J."/>
            <person name="Wagner R.M."/>
            <person name="Woods C.W."/>
            <person name="Gelman D.G."/>
            <person name="Harrison D."/>
            <person name="Bell R.A."/>
        </authorList>
    </citation>
    <scope>PROTEIN SEQUENCE</scope>
    <source>
        <tissue>Brain</tissue>
    </source>
</reference>
<protein>
    <recommendedName>
        <fullName>Testis ecdysiotropin peptide C</fullName>
        <shortName>TE</shortName>
    </recommendedName>
</protein>